<proteinExistence type="inferred from homology"/>
<accession>Q71XW7</accession>
<protein>
    <recommendedName>
        <fullName evidence="1">Large ribosomal subunit protein bL32B</fullName>
    </recommendedName>
    <alternativeName>
        <fullName evidence="2">50S ribosomal protein L32 2</fullName>
    </alternativeName>
</protein>
<keyword id="KW-0687">Ribonucleoprotein</keyword>
<keyword id="KW-0689">Ribosomal protein</keyword>
<gene>
    <name type="primary">rpmF2</name>
    <name type="synonym">rpmF-2</name>
    <name type="ordered locus">LMOf2365_2078</name>
</gene>
<comment type="similarity">
    <text evidence="2">Belongs to the bacterial ribosomal protein bL32 family.</text>
</comment>
<sequence>MAVPFRRTSKAKKRKRRTHVKLQLPGMNECSNCGEYRLSHHVCPECGQYDGKDVANS</sequence>
<evidence type="ECO:0000255" key="1">
    <source>
        <dbReference type="HAMAP-Rule" id="MF_00340"/>
    </source>
</evidence>
<evidence type="ECO:0000305" key="2"/>
<name>RL322_LISMF</name>
<reference key="1">
    <citation type="journal article" date="2004" name="Nucleic Acids Res.">
        <title>Whole genome comparisons of serotype 4b and 1/2a strains of the food-borne pathogen Listeria monocytogenes reveal new insights into the core genome components of this species.</title>
        <authorList>
            <person name="Nelson K.E."/>
            <person name="Fouts D.E."/>
            <person name="Mongodin E.F."/>
            <person name="Ravel J."/>
            <person name="DeBoy R.T."/>
            <person name="Kolonay J.F."/>
            <person name="Rasko D.A."/>
            <person name="Angiuoli S.V."/>
            <person name="Gill S.R."/>
            <person name="Paulsen I.T."/>
            <person name="Peterson J.D."/>
            <person name="White O."/>
            <person name="Nelson W.C."/>
            <person name="Nierman W.C."/>
            <person name="Beanan M.J."/>
            <person name="Brinkac L.M."/>
            <person name="Daugherty S.C."/>
            <person name="Dodson R.J."/>
            <person name="Durkin A.S."/>
            <person name="Madupu R."/>
            <person name="Haft D.H."/>
            <person name="Selengut J."/>
            <person name="Van Aken S.E."/>
            <person name="Khouri H.M."/>
            <person name="Fedorova N."/>
            <person name="Forberger H.A."/>
            <person name="Tran B."/>
            <person name="Kathariou S."/>
            <person name="Wonderling L.D."/>
            <person name="Uhlich G.A."/>
            <person name="Bayles D.O."/>
            <person name="Luchansky J.B."/>
            <person name="Fraser C.M."/>
        </authorList>
    </citation>
    <scope>NUCLEOTIDE SEQUENCE [LARGE SCALE GENOMIC DNA]</scope>
    <source>
        <strain>F2365</strain>
    </source>
</reference>
<organism>
    <name type="scientific">Listeria monocytogenes serotype 4b (strain F2365)</name>
    <dbReference type="NCBI Taxonomy" id="265669"/>
    <lineage>
        <taxon>Bacteria</taxon>
        <taxon>Bacillati</taxon>
        <taxon>Bacillota</taxon>
        <taxon>Bacilli</taxon>
        <taxon>Bacillales</taxon>
        <taxon>Listeriaceae</taxon>
        <taxon>Listeria</taxon>
    </lineage>
</organism>
<feature type="chain" id="PRO_0000172359" description="Large ribosomal subunit protein bL32B">
    <location>
        <begin position="1"/>
        <end position="57"/>
    </location>
</feature>
<dbReference type="EMBL" id="AE017262">
    <property type="protein sequence ID" value="AAT04848.1"/>
    <property type="molecule type" value="Genomic_DNA"/>
</dbReference>
<dbReference type="SMR" id="Q71XW7"/>
<dbReference type="KEGG" id="lmf:LMOf2365_2078"/>
<dbReference type="HOGENOM" id="CLU_129084_1_3_9"/>
<dbReference type="GO" id="GO:0015934">
    <property type="term" value="C:large ribosomal subunit"/>
    <property type="evidence" value="ECO:0007669"/>
    <property type="project" value="InterPro"/>
</dbReference>
<dbReference type="GO" id="GO:0003735">
    <property type="term" value="F:structural constituent of ribosome"/>
    <property type="evidence" value="ECO:0007669"/>
    <property type="project" value="InterPro"/>
</dbReference>
<dbReference type="GO" id="GO:0006412">
    <property type="term" value="P:translation"/>
    <property type="evidence" value="ECO:0007669"/>
    <property type="project" value="UniProtKB-UniRule"/>
</dbReference>
<dbReference type="HAMAP" id="MF_00340">
    <property type="entry name" value="Ribosomal_bL32"/>
    <property type="match status" value="1"/>
</dbReference>
<dbReference type="InterPro" id="IPR002677">
    <property type="entry name" value="Ribosomal_bL32"/>
</dbReference>
<dbReference type="InterPro" id="IPR044957">
    <property type="entry name" value="Ribosomal_bL32_bact"/>
</dbReference>
<dbReference type="InterPro" id="IPR011332">
    <property type="entry name" value="Ribosomal_zn-bd"/>
</dbReference>
<dbReference type="NCBIfam" id="TIGR01031">
    <property type="entry name" value="rpmF_bact"/>
    <property type="match status" value="1"/>
</dbReference>
<dbReference type="PANTHER" id="PTHR35534">
    <property type="entry name" value="50S RIBOSOMAL PROTEIN L32"/>
    <property type="match status" value="1"/>
</dbReference>
<dbReference type="PANTHER" id="PTHR35534:SF2">
    <property type="entry name" value="LARGE RIBOSOMAL SUBUNIT PROTEIN BL32"/>
    <property type="match status" value="1"/>
</dbReference>
<dbReference type="Pfam" id="PF01783">
    <property type="entry name" value="Ribosomal_L32p"/>
    <property type="match status" value="1"/>
</dbReference>
<dbReference type="SUPFAM" id="SSF57829">
    <property type="entry name" value="Zn-binding ribosomal proteins"/>
    <property type="match status" value="1"/>
</dbReference>